<name>MYG_GOBGI</name>
<evidence type="ECO:0000250" key="1"/>
<evidence type="ECO:0000250" key="2">
    <source>
        <dbReference type="UniProtKB" id="P02144"/>
    </source>
</evidence>
<evidence type="ECO:0000250" key="3">
    <source>
        <dbReference type="UniProtKB" id="P02185"/>
    </source>
</evidence>
<evidence type="ECO:0000250" key="4">
    <source>
        <dbReference type="UniProtKB" id="P02189"/>
    </source>
</evidence>
<evidence type="ECO:0000250" key="5">
    <source>
        <dbReference type="UniProtKB" id="P68082"/>
    </source>
</evidence>
<evidence type="ECO:0000255" key="6">
    <source>
        <dbReference type="PROSITE-ProRule" id="PRU00238"/>
    </source>
</evidence>
<proteinExistence type="evidence at transcript level"/>
<reference key="1">
    <citation type="journal article" date="1997" name="Mol. Mar. Biol. Biotechnol.">
        <title>Conservation of the myoglobin gene among Antarctic notothenioid fishes.</title>
        <authorList>
            <person name="Vayda M.E."/>
            <person name="Small D.J."/>
            <person name="Yuan M.-L."/>
            <person name="Costello L."/>
            <person name="Sidell B.D."/>
        </authorList>
    </citation>
    <scope>NUCLEOTIDE SEQUENCE [MRNA]</scope>
    <source>
        <tissue>Heart ventricle</tissue>
    </source>
</reference>
<organism>
    <name type="scientific">Gobionotothen gibberifrons</name>
    <name type="common">Humped rockcod</name>
    <name type="synonym">Notothenia gibberifrons</name>
    <dbReference type="NCBI Taxonomy" id="36202"/>
    <lineage>
        <taxon>Eukaryota</taxon>
        <taxon>Metazoa</taxon>
        <taxon>Chordata</taxon>
        <taxon>Craniata</taxon>
        <taxon>Vertebrata</taxon>
        <taxon>Euteleostomi</taxon>
        <taxon>Actinopterygii</taxon>
        <taxon>Neopterygii</taxon>
        <taxon>Teleostei</taxon>
        <taxon>Neoteleostei</taxon>
        <taxon>Acanthomorphata</taxon>
        <taxon>Eupercaria</taxon>
        <taxon>Perciformes</taxon>
        <taxon>Notothenioidei</taxon>
        <taxon>Nototheniidae</taxon>
        <taxon>Gobionotothen</taxon>
    </lineage>
</organism>
<accession>Q9DEN9</accession>
<gene>
    <name type="primary">mb</name>
</gene>
<protein>
    <recommendedName>
        <fullName>Myoglobin</fullName>
    </recommendedName>
    <alternativeName>
        <fullName evidence="2">Nitrite reductase MB</fullName>
        <ecNumber evidence="2">1.7.-.-</ecNumber>
    </alternativeName>
    <alternativeName>
        <fullName evidence="2">Pseudoperoxidase MB</fullName>
        <ecNumber evidence="2">1.11.1.-</ecNumber>
    </alternativeName>
</protein>
<sequence length="147" mass="15707">MADFDMVLKCWGPVEADYTTHGSLVLTRLFTEHPETLKLFPKFAGIAHGDLAGDAGVSAHGATVLNKLGDLLKARGAHAALLKPLSSSHATKHKIPIINFKLIAEVIGKVMEEKAGLDAAGQTALRNVMAVIIADMEADYKELGFTE</sequence>
<feature type="initiator methionine" description="Removed" evidence="1">
    <location>
        <position position="1"/>
    </location>
</feature>
<feature type="chain" id="PRO_0000053365" description="Myoglobin">
    <location>
        <begin position="2"/>
        <end position="147"/>
    </location>
</feature>
<feature type="domain" description="Globin" evidence="6">
    <location>
        <begin position="2"/>
        <end position="141"/>
    </location>
</feature>
<feature type="binding site" evidence="5">
    <location>
        <position position="60"/>
    </location>
    <ligand>
        <name>nitrite</name>
        <dbReference type="ChEBI" id="CHEBI:16301"/>
    </ligand>
</feature>
<feature type="binding site" evidence="4 6">
    <location>
        <position position="60"/>
    </location>
    <ligand>
        <name>O2</name>
        <dbReference type="ChEBI" id="CHEBI:15379"/>
    </ligand>
</feature>
<feature type="binding site" description="proximal binding residue" evidence="2">
    <location>
        <position position="89"/>
    </location>
    <ligand>
        <name>heme b</name>
        <dbReference type="ChEBI" id="CHEBI:60344"/>
    </ligand>
    <ligandPart>
        <name>Fe</name>
        <dbReference type="ChEBI" id="CHEBI:18248"/>
    </ligandPart>
</feature>
<keyword id="KW-0963">Cytoplasm</keyword>
<keyword id="KW-0349">Heme</keyword>
<keyword id="KW-0408">Iron</keyword>
<keyword id="KW-0479">Metal-binding</keyword>
<keyword id="KW-0514">Muscle protein</keyword>
<keyword id="KW-0560">Oxidoreductase</keyword>
<keyword id="KW-0561">Oxygen transport</keyword>
<keyword id="KW-0813">Transport</keyword>
<dbReference type="EC" id="1.7.-.-" evidence="2"/>
<dbReference type="EC" id="1.11.1.-" evidence="2"/>
<dbReference type="EMBL" id="U71057">
    <property type="protein sequence ID" value="AAG16645.1"/>
    <property type="molecule type" value="mRNA"/>
</dbReference>
<dbReference type="SMR" id="Q9DEN9"/>
<dbReference type="GO" id="GO:0070062">
    <property type="term" value="C:extracellular exosome"/>
    <property type="evidence" value="ECO:0007669"/>
    <property type="project" value="TreeGrafter"/>
</dbReference>
<dbReference type="GO" id="GO:0016528">
    <property type="term" value="C:sarcoplasm"/>
    <property type="evidence" value="ECO:0000250"/>
    <property type="project" value="UniProtKB"/>
</dbReference>
<dbReference type="GO" id="GO:0020037">
    <property type="term" value="F:heme binding"/>
    <property type="evidence" value="ECO:0007669"/>
    <property type="project" value="InterPro"/>
</dbReference>
<dbReference type="GO" id="GO:0046872">
    <property type="term" value="F:metal ion binding"/>
    <property type="evidence" value="ECO:0007669"/>
    <property type="project" value="UniProtKB-KW"/>
</dbReference>
<dbReference type="GO" id="GO:0098809">
    <property type="term" value="F:nitrite reductase activity"/>
    <property type="evidence" value="ECO:0000250"/>
    <property type="project" value="UniProtKB"/>
</dbReference>
<dbReference type="GO" id="GO:0019825">
    <property type="term" value="F:oxygen binding"/>
    <property type="evidence" value="ECO:0007669"/>
    <property type="project" value="InterPro"/>
</dbReference>
<dbReference type="GO" id="GO:0005344">
    <property type="term" value="F:oxygen carrier activity"/>
    <property type="evidence" value="ECO:0000250"/>
    <property type="project" value="UniProtKB"/>
</dbReference>
<dbReference type="GO" id="GO:0004601">
    <property type="term" value="F:peroxidase activity"/>
    <property type="evidence" value="ECO:0000250"/>
    <property type="project" value="UniProtKB"/>
</dbReference>
<dbReference type="GO" id="GO:0019430">
    <property type="term" value="P:removal of superoxide radicals"/>
    <property type="evidence" value="ECO:0000250"/>
    <property type="project" value="UniProtKB"/>
</dbReference>
<dbReference type="Gene3D" id="6.10.140.2100">
    <property type="match status" value="1"/>
</dbReference>
<dbReference type="Gene3D" id="6.10.140.2110">
    <property type="match status" value="1"/>
</dbReference>
<dbReference type="InterPro" id="IPR000971">
    <property type="entry name" value="Globin"/>
</dbReference>
<dbReference type="InterPro" id="IPR009050">
    <property type="entry name" value="Globin-like_sf"/>
</dbReference>
<dbReference type="InterPro" id="IPR002335">
    <property type="entry name" value="Myoglobin"/>
</dbReference>
<dbReference type="PANTHER" id="PTHR47132">
    <property type="entry name" value="MYOGLOBIN"/>
    <property type="match status" value="1"/>
</dbReference>
<dbReference type="PANTHER" id="PTHR47132:SF1">
    <property type="entry name" value="MYOGLOBIN"/>
    <property type="match status" value="1"/>
</dbReference>
<dbReference type="Pfam" id="PF00042">
    <property type="entry name" value="Globin"/>
    <property type="match status" value="1"/>
</dbReference>
<dbReference type="PRINTS" id="PR00613">
    <property type="entry name" value="MYOGLOBIN"/>
</dbReference>
<dbReference type="SUPFAM" id="SSF46458">
    <property type="entry name" value="Globin-like"/>
    <property type="match status" value="1"/>
</dbReference>
<dbReference type="PROSITE" id="PS01033">
    <property type="entry name" value="GLOBIN"/>
    <property type="match status" value="1"/>
</dbReference>
<comment type="function">
    <text evidence="2">Monomeric heme protein which primary function is to store oxygen and facilitate its diffusion within muscle tissues. Reversibly binds oxygen through a pentacoordinated heme iron and enables its timely and efficient release as needed during periods of heightened demand. Depending on the oxidative conditions of tissues and cells, and in addition to its ability to bind oxygen, it also has a nitrite reductase activity whereby it regulates the production of bioactive nitric oxide. Under stress conditions, like hypoxia and anoxia, it also protects cells against reactive oxygen species thanks to its pseudoperoxidase activity.</text>
</comment>
<comment type="catalytic activity">
    <reaction evidence="2">
        <text>Fe(III)-heme b-[protein] + nitric oxide + H2O = Fe(II)-heme b-[protein] + nitrite + 2 H(+)</text>
        <dbReference type="Rhea" id="RHEA:77711"/>
        <dbReference type="Rhea" id="RHEA-COMP:18975"/>
        <dbReference type="Rhea" id="RHEA-COMP:18976"/>
        <dbReference type="ChEBI" id="CHEBI:15377"/>
        <dbReference type="ChEBI" id="CHEBI:15378"/>
        <dbReference type="ChEBI" id="CHEBI:16301"/>
        <dbReference type="ChEBI" id="CHEBI:16480"/>
        <dbReference type="ChEBI" id="CHEBI:55376"/>
        <dbReference type="ChEBI" id="CHEBI:60344"/>
    </reaction>
    <physiologicalReaction direction="right-to-left" evidence="2">
        <dbReference type="Rhea" id="RHEA:77713"/>
    </physiologicalReaction>
</comment>
<comment type="catalytic activity">
    <reaction evidence="2">
        <text>H2O2 + AH2 = A + 2 H2O</text>
        <dbReference type="Rhea" id="RHEA:30275"/>
        <dbReference type="ChEBI" id="CHEBI:13193"/>
        <dbReference type="ChEBI" id="CHEBI:15377"/>
        <dbReference type="ChEBI" id="CHEBI:16240"/>
        <dbReference type="ChEBI" id="CHEBI:17499"/>
    </reaction>
</comment>
<comment type="subunit">
    <text evidence="3">Monomeric.</text>
</comment>
<comment type="subcellular location">
    <subcellularLocation>
        <location evidence="2">Cytoplasm</location>
        <location evidence="2">Sarcoplasm</location>
    </subcellularLocation>
</comment>
<comment type="similarity">
    <text evidence="6">Belongs to the globin family.</text>
</comment>